<dbReference type="EMBL" id="L22169">
    <property type="protein sequence ID" value="AAA31145.1"/>
    <property type="molecule type" value="mRNA"/>
</dbReference>
<dbReference type="EMBL" id="D45065">
    <property type="protein sequence ID" value="BAA08093.1"/>
    <property type="molecule type" value="mRNA"/>
</dbReference>
<dbReference type="PIR" id="S70433">
    <property type="entry name" value="S70433"/>
</dbReference>
<dbReference type="RefSeq" id="NP_999058.1">
    <property type="nucleotide sequence ID" value="NM_213893.1"/>
</dbReference>
<dbReference type="SMR" id="P42098"/>
<dbReference type="FunCoup" id="P42098">
    <property type="interactions" value="4"/>
</dbReference>
<dbReference type="STRING" id="9823.ENSSSCP00000008213"/>
<dbReference type="GlyConnect" id="632">
    <property type="glycosylation" value="5 N-Linked glycans (3 sites)"/>
</dbReference>
<dbReference type="GlyConnect" id="636">
    <property type="glycosylation" value="6 N-Linked glycans"/>
</dbReference>
<dbReference type="GlyCosmos" id="P42098">
    <property type="glycosylation" value="7 sites, 10 glycans"/>
</dbReference>
<dbReference type="GlyGen" id="P42098">
    <property type="glycosylation" value="8 sites, 10 N-linked glycans (4 sites)"/>
</dbReference>
<dbReference type="iPTMnet" id="P42098"/>
<dbReference type="PaxDb" id="9823-ENSSSCP00000008213"/>
<dbReference type="GeneID" id="396927"/>
<dbReference type="KEGG" id="ssc:396927"/>
<dbReference type="CTD" id="7784"/>
<dbReference type="eggNOG" id="ENOG502QSZF">
    <property type="taxonomic scope" value="Eukaryota"/>
</dbReference>
<dbReference type="InParanoid" id="P42098"/>
<dbReference type="OrthoDB" id="8880842at2759"/>
<dbReference type="Proteomes" id="UP000008227">
    <property type="component" value="Unplaced"/>
</dbReference>
<dbReference type="Proteomes" id="UP000314985">
    <property type="component" value="Unplaced"/>
</dbReference>
<dbReference type="Proteomes" id="UP000694570">
    <property type="component" value="Unplaced"/>
</dbReference>
<dbReference type="Proteomes" id="UP000694571">
    <property type="component" value="Unplaced"/>
</dbReference>
<dbReference type="Proteomes" id="UP000694720">
    <property type="component" value="Unplaced"/>
</dbReference>
<dbReference type="Proteomes" id="UP000694722">
    <property type="component" value="Unplaced"/>
</dbReference>
<dbReference type="Proteomes" id="UP000694723">
    <property type="component" value="Unplaced"/>
</dbReference>
<dbReference type="Proteomes" id="UP000694724">
    <property type="component" value="Unplaced"/>
</dbReference>
<dbReference type="Proteomes" id="UP000694725">
    <property type="component" value="Unplaced"/>
</dbReference>
<dbReference type="Proteomes" id="UP000694726">
    <property type="component" value="Unplaced"/>
</dbReference>
<dbReference type="Proteomes" id="UP000694727">
    <property type="component" value="Unplaced"/>
</dbReference>
<dbReference type="Proteomes" id="UP000694728">
    <property type="component" value="Unplaced"/>
</dbReference>
<dbReference type="GO" id="GO:0062023">
    <property type="term" value="C:collagen-containing extracellular matrix"/>
    <property type="evidence" value="ECO:0000250"/>
    <property type="project" value="UniProtKB"/>
</dbReference>
<dbReference type="GO" id="GO:0035805">
    <property type="term" value="C:egg coat"/>
    <property type="evidence" value="ECO:0000250"/>
    <property type="project" value="UniProtKB"/>
</dbReference>
<dbReference type="GO" id="GO:0031012">
    <property type="term" value="C:extracellular matrix"/>
    <property type="evidence" value="ECO:0000318"/>
    <property type="project" value="GO_Central"/>
</dbReference>
<dbReference type="GO" id="GO:0005615">
    <property type="term" value="C:extracellular space"/>
    <property type="evidence" value="ECO:0000250"/>
    <property type="project" value="UniProtKB"/>
</dbReference>
<dbReference type="GO" id="GO:0005886">
    <property type="term" value="C:plasma membrane"/>
    <property type="evidence" value="ECO:0000250"/>
    <property type="project" value="UniProtKB"/>
</dbReference>
<dbReference type="GO" id="GO:0032190">
    <property type="term" value="F:acrosin binding"/>
    <property type="evidence" value="ECO:0000318"/>
    <property type="project" value="GO_Central"/>
</dbReference>
<dbReference type="GO" id="GO:0030246">
    <property type="term" value="F:carbohydrate binding"/>
    <property type="evidence" value="ECO:0000250"/>
    <property type="project" value="UniProtKB"/>
</dbReference>
<dbReference type="GO" id="GO:0048018">
    <property type="term" value="F:receptor ligand activity"/>
    <property type="evidence" value="ECO:0000250"/>
    <property type="project" value="UniProtKB"/>
</dbReference>
<dbReference type="GO" id="GO:0035804">
    <property type="term" value="F:structural constituent of egg coat"/>
    <property type="evidence" value="ECO:0000250"/>
    <property type="project" value="UniProtKB"/>
</dbReference>
<dbReference type="GO" id="GO:0007339">
    <property type="term" value="P:binding of sperm to zona pellucida"/>
    <property type="evidence" value="ECO:0000250"/>
    <property type="project" value="UniProtKB"/>
</dbReference>
<dbReference type="GO" id="GO:0001825">
    <property type="term" value="P:blastocyst formation"/>
    <property type="evidence" value="ECO:0000250"/>
    <property type="project" value="UniProtKB"/>
</dbReference>
<dbReference type="GO" id="GO:0035803">
    <property type="term" value="P:egg coat formation"/>
    <property type="evidence" value="ECO:0000250"/>
    <property type="project" value="UniProtKB"/>
</dbReference>
<dbReference type="GO" id="GO:0002455">
    <property type="term" value="P:humoral immune response mediated by circulating immunoglobulin"/>
    <property type="evidence" value="ECO:0000250"/>
    <property type="project" value="UniProtKB"/>
</dbReference>
<dbReference type="GO" id="GO:2000360">
    <property type="term" value="P:negative regulation of binding of sperm to zona pellucida"/>
    <property type="evidence" value="ECO:0000250"/>
    <property type="project" value="UniProtKB"/>
</dbReference>
<dbReference type="GO" id="GO:0045892">
    <property type="term" value="P:negative regulation of DNA-templated transcription"/>
    <property type="evidence" value="ECO:0000250"/>
    <property type="project" value="UniProtKB"/>
</dbReference>
<dbReference type="GO" id="GO:0048599">
    <property type="term" value="P:oocyte development"/>
    <property type="evidence" value="ECO:0000250"/>
    <property type="project" value="UniProtKB"/>
</dbReference>
<dbReference type="GO" id="GO:2000368">
    <property type="term" value="P:positive regulation of acrosomal vesicle exocytosis"/>
    <property type="evidence" value="ECO:0000250"/>
    <property type="project" value="UniProtKB"/>
</dbReference>
<dbReference type="GO" id="GO:2000344">
    <property type="term" value="P:positive regulation of acrosome reaction"/>
    <property type="evidence" value="ECO:0000250"/>
    <property type="project" value="UniProtKB"/>
</dbReference>
<dbReference type="GO" id="GO:2000388">
    <property type="term" value="P:positive regulation of antral ovarian follicle growth"/>
    <property type="evidence" value="ECO:0000250"/>
    <property type="project" value="UniProtKB"/>
</dbReference>
<dbReference type="GO" id="GO:0045893">
    <property type="term" value="P:positive regulation of DNA-templated transcription"/>
    <property type="evidence" value="ECO:0000250"/>
    <property type="project" value="UniProtKB"/>
</dbReference>
<dbReference type="GO" id="GO:0002922">
    <property type="term" value="P:positive regulation of humoral immune response"/>
    <property type="evidence" value="ECO:0000250"/>
    <property type="project" value="UniProtKB"/>
</dbReference>
<dbReference type="GO" id="GO:0050729">
    <property type="term" value="P:positive regulation of inflammatory response"/>
    <property type="evidence" value="ECO:0000250"/>
    <property type="project" value="UniProtKB"/>
</dbReference>
<dbReference type="GO" id="GO:0032753">
    <property type="term" value="P:positive regulation of interleukin-4 production"/>
    <property type="evidence" value="ECO:0000250"/>
    <property type="project" value="UniProtKB"/>
</dbReference>
<dbReference type="GO" id="GO:0002687">
    <property type="term" value="P:positive regulation of leukocyte migration"/>
    <property type="evidence" value="ECO:0000250"/>
    <property type="project" value="UniProtKB"/>
</dbReference>
<dbReference type="GO" id="GO:2000386">
    <property type="term" value="P:positive regulation of ovarian follicle development"/>
    <property type="evidence" value="ECO:0000250"/>
    <property type="project" value="UniProtKB"/>
</dbReference>
<dbReference type="GO" id="GO:0042102">
    <property type="term" value="P:positive regulation of T cell proliferation"/>
    <property type="evidence" value="ECO:0000250"/>
    <property type="project" value="UniProtKB"/>
</dbReference>
<dbReference type="GO" id="GO:0032729">
    <property type="term" value="P:positive regulation of type II interferon production"/>
    <property type="evidence" value="ECO:0000250"/>
    <property type="project" value="UniProtKB"/>
</dbReference>
<dbReference type="GO" id="GO:0001809">
    <property type="term" value="P:positive regulation of type IV hypersensitivity"/>
    <property type="evidence" value="ECO:0000314"/>
    <property type="project" value="UniProtKB"/>
</dbReference>
<dbReference type="FunFam" id="2.60.40.3210:FF:000001">
    <property type="entry name" value="Zona pellucida sperm-binding protein 3"/>
    <property type="match status" value="1"/>
</dbReference>
<dbReference type="FunFam" id="2.60.40.4100:FF:000002">
    <property type="entry name" value="Zona pellucida sperm-binding protein 3"/>
    <property type="match status" value="1"/>
</dbReference>
<dbReference type="Gene3D" id="2.60.40.4100">
    <property type="entry name" value="Zona pellucida, ZP-C domain"/>
    <property type="match status" value="1"/>
</dbReference>
<dbReference type="Gene3D" id="2.60.40.3210">
    <property type="entry name" value="Zona pellucida, ZP-N domain"/>
    <property type="match status" value="1"/>
</dbReference>
<dbReference type="InterPro" id="IPR055355">
    <property type="entry name" value="ZP-C"/>
</dbReference>
<dbReference type="InterPro" id="IPR042235">
    <property type="entry name" value="ZP-C_dom"/>
</dbReference>
<dbReference type="InterPro" id="IPR055356">
    <property type="entry name" value="ZP-N"/>
</dbReference>
<dbReference type="InterPro" id="IPR048290">
    <property type="entry name" value="ZP_chr"/>
</dbReference>
<dbReference type="InterPro" id="IPR001507">
    <property type="entry name" value="ZP_dom"/>
</dbReference>
<dbReference type="InterPro" id="IPR017977">
    <property type="entry name" value="ZP_dom_CS"/>
</dbReference>
<dbReference type="PANTHER" id="PTHR11576">
    <property type="entry name" value="ZONA PELLUCIDA SPERM-BINDING PROTEIN 3"/>
    <property type="match status" value="1"/>
</dbReference>
<dbReference type="PANTHER" id="PTHR11576:SF2">
    <property type="entry name" value="ZONA PELLUCIDA SPERM-BINDING PROTEIN 3"/>
    <property type="match status" value="1"/>
</dbReference>
<dbReference type="Pfam" id="PF00100">
    <property type="entry name" value="Zona_pellucida"/>
    <property type="match status" value="1"/>
</dbReference>
<dbReference type="Pfam" id="PF23344">
    <property type="entry name" value="ZP-N"/>
    <property type="match status" value="1"/>
</dbReference>
<dbReference type="PRINTS" id="PR00023">
    <property type="entry name" value="ZPELLUCIDA"/>
</dbReference>
<dbReference type="SMART" id="SM00241">
    <property type="entry name" value="ZP"/>
    <property type="match status" value="1"/>
</dbReference>
<dbReference type="PROSITE" id="PS00682">
    <property type="entry name" value="ZP_1"/>
    <property type="match status" value="1"/>
</dbReference>
<dbReference type="PROSITE" id="PS51034">
    <property type="entry name" value="ZP_2"/>
    <property type="match status" value="1"/>
</dbReference>
<protein>
    <recommendedName>
        <fullName>Zona pellucida sperm-binding protein 3</fullName>
    </recommendedName>
    <alternativeName>
        <fullName>Sperm receptor</fullName>
    </alternativeName>
    <alternativeName>
        <fullName>Zona pellucida glycoprotein 3</fullName>
        <shortName>Zp-3</shortName>
    </alternativeName>
    <alternativeName>
        <fullName>Zona pellucida glycoprotein 3-beta</fullName>
        <shortName>Zp-3-beta</shortName>
        <shortName>Zp3-beta</shortName>
    </alternativeName>
    <alternativeName>
        <fullName>Zona pellucida protein C</fullName>
    </alternativeName>
    <component>
        <recommendedName>
            <fullName>Processed zona pellucida sperm-binding protein 3</fullName>
        </recommendedName>
    </component>
</protein>
<name>ZP3_PIG</name>
<sequence>MAPSWRFFVCFLLWGGTELCSPQPVWQDEGQRLRPSKPPTVMVECQEAQLVVIVSKDLFGTGKLIRPADLSLGPAKCEPLVSQDTDAVVRFEVGLHECGSSLQVTDDALVYSTFLRHDPRPAGNLSILRTNRAEVPIECHYPRQGNVSSWAILPTWVPFRTTVFSEEKLVFSLRLMEENWSAEKMTPTFQLGDRAHLQAQVHTGSHVPLRLFVDHCVATLTPDWNTSPSHTIVDFHGCLVDGLTEASSAFKAPRPGPETLQFTVDVFHFANDSRNTIYITCHLKVTPADRVPDQLNKACSFSKSSNRWSPVEGPAVICRCCHKGQCGTPSLSRKLSMPKRQSAPRSRRHVTDEADVTVGPLIFLGKTSDHGVEGSTSSPTSVMVGLGLATVVTLTLATIVLGVPRRRRAAAHLVCPVSASQ</sequence>
<proteinExistence type="evidence at protein level"/>
<feature type="signal peptide" evidence="10">
    <location>
        <begin position="1"/>
        <end position="22"/>
    </location>
</feature>
<feature type="chain" id="PRO_0000041717" description="Zona pellucida sperm-binding protein 3">
    <location>
        <begin position="23"/>
        <end position="332"/>
    </location>
</feature>
<feature type="chain" id="PRO_0000304573" description="Processed zona pellucida sperm-binding protein 3">
    <location>
        <begin position="23"/>
        <end status="unknown"/>
    </location>
</feature>
<feature type="propeptide" id="PRO_0000041718" description="Removed in mature form" evidence="10">
    <location>
        <begin position="333"/>
        <end position="421"/>
    </location>
</feature>
<feature type="topological domain" description="Extracellular" evidence="5">
    <location>
        <begin position="23"/>
        <end position="381"/>
    </location>
</feature>
<feature type="transmembrane region" description="Helical" evidence="5">
    <location>
        <begin position="382"/>
        <end position="402"/>
    </location>
</feature>
<feature type="topological domain" description="Cytoplasmic" evidence="5">
    <location>
        <begin position="403"/>
        <end position="421"/>
    </location>
</feature>
<feature type="domain" description="ZP" evidence="6">
    <location>
        <begin position="44"/>
        <end position="306"/>
    </location>
</feature>
<feature type="region of interest" description="Disordered" evidence="7">
    <location>
        <begin position="331"/>
        <end position="351"/>
    </location>
</feature>
<feature type="modified residue" description="Pyrrolidone carboxylic acid" evidence="10">
    <location>
        <position position="23"/>
    </location>
</feature>
<feature type="glycosylation site" id="CAR_000151" description="N-linked (GlcNAc...) asparagine" evidence="9">
    <location>
        <position position="124"/>
    </location>
</feature>
<feature type="glycosylation site" id="CAR_000152" description="N-linked (GlcNAc...) asparagine" evidence="9">
    <location>
        <position position="146"/>
    </location>
</feature>
<feature type="glycosylation site" description="O-linked (GalNAc...) threonine" evidence="9">
    <location>
        <position position="155"/>
    </location>
</feature>
<feature type="glycosylation site" description="O-linked (GalNAc...) threonine" evidence="9">
    <location>
        <position position="161"/>
    </location>
</feature>
<feature type="glycosylation site" description="O-linked (GalNAc...) threonine" evidence="9">
    <location>
        <position position="162"/>
    </location>
</feature>
<feature type="glycosylation site" description="N-linked (GlcNAc...) asparagine" evidence="5">
    <location>
        <position position="179"/>
    </location>
</feature>
<feature type="glycosylation site" id="CAR_000153" description="N-linked (GlcNAc...) asparagine" evidence="9">
    <location>
        <position position="271"/>
    </location>
</feature>
<feature type="disulfide bond" evidence="1">
    <location>
        <begin position="45"/>
        <end position="139"/>
    </location>
</feature>
<feature type="disulfide bond" evidence="1">
    <location>
        <begin position="77"/>
        <end position="98"/>
    </location>
</feature>
<feature type="disulfide bond" evidence="1">
    <location>
        <begin position="216"/>
        <end position="281"/>
    </location>
</feature>
<feature type="disulfide bond" evidence="1">
    <location>
        <begin position="238"/>
        <end position="299"/>
    </location>
</feature>
<feature type="sequence conflict" description="In Ref. 2; BAA08093." evidence="11" ref="2">
    <location>
        <position position="101"/>
    </location>
</feature>
<feature type="sequence conflict" description="In Ref. 2; BAA08093." evidence="11" ref="2">
    <original>D</original>
    <variation>V</variation>
    <location>
        <position position="107"/>
    </location>
</feature>
<feature type="sequence conflict" description="In Ref. 2; BAA08093." evidence="11" ref="2">
    <original>VF</original>
    <variation>GV</variation>
    <location>
        <begin position="163"/>
        <end position="164"/>
    </location>
</feature>
<feature type="sequence conflict" description="In Ref. 2; BAA08093." evidence="11" ref="2">
    <original>P</original>
    <variation>A</variation>
    <location>
        <position position="404"/>
    </location>
</feature>
<reference key="1">
    <citation type="journal article" date="1994" name="DNA Seq.">
        <title>Cloning and characterization of zona pellucida genes and cDNAs from a variety of mammalian species: the ZPA, ZPB and ZPC gene families.</title>
        <authorList>
            <person name="Harris J.D."/>
            <person name="Hibler D.W."/>
            <person name="Fontenot G.K."/>
            <person name="Hsu K.T."/>
            <person name="Yurewicz E.C."/>
            <person name="Sacco A.G."/>
        </authorList>
    </citation>
    <scope>NUCLEOTIDE SEQUENCE [MRNA]</scope>
    <source>
        <tissue>Ovary</tissue>
    </source>
</reference>
<reference key="2">
    <citation type="submission" date="1995-01" db="EMBL/GenBank/DDBJ databases">
        <authorList>
            <person name="Okazaki Y."/>
            <person name="Sugimoto M."/>
        </authorList>
    </citation>
    <scope>NUCLEOTIDE SEQUENCE [MRNA]</scope>
    <source>
        <tissue>Ovary</tissue>
    </source>
</reference>
<reference key="3">
    <citation type="journal article" date="1995" name="Mol. Reprod. Dev.">
        <title>Localization of epitopes for monoclonal antibodies at the N-terminus of the porcine zona pellucida glycoprotein pZPC.</title>
        <authorList>
            <person name="Gupta S.K."/>
            <person name="Yurewicz E.C."/>
            <person name="Afzalpurkar A."/>
            <person name="Rao K.V."/>
            <person name="Gage D.A."/>
            <person name="Wu H."/>
            <person name="Sacco A.G."/>
        </authorList>
    </citation>
    <scope>PROTEIN SEQUENCE OF N-TERMINUS</scope>
    <scope>PYROGLUTAMATE FORMATION AT GLN-23</scope>
    <scope>IDENTIFICATION BY MASS SPECTROMETRY</scope>
</reference>
<reference key="4">
    <citation type="journal article" date="2003" name="Biochem. Biophys. Res. Commun.">
        <title>Identification of the carboxyl termini of porcine zona pellucida glycoproteins ZPB and ZPC.</title>
        <authorList>
            <person name="Yonezawa N."/>
            <person name="Nakano M."/>
        </authorList>
    </citation>
    <scope>PROTEOLYTIC PROCESSING</scope>
</reference>
<reference key="5">
    <citation type="journal article" date="1992" name="Mol. Reprod. Dev.">
        <title>Porcine oocyte zona pellucida M(r) 55,000 glycoproteins: identification of O-glycosylated domains.</title>
        <authorList>
            <person name="Yurewicz E.C."/>
            <person name="Pack B.A."/>
            <person name="Sacco A.G."/>
        </authorList>
    </citation>
    <scope>GLYCOSYLATION</scope>
</reference>
<comment type="function">
    <text>Component of the zona pellucida, an extracellular matrix surrounding oocytes which mediates sperm binding, induction of the acrosome reaction and prevents post-fertilization polyspermy. The zona pellucida is composed of 3 to 4 glycoproteins, ZP1, ZP2, ZP3, and ZP4. ZP3 is essential for zona matrix formation. May not have a sperm-binding activity by itself but may increase sperm-binding activity of ZPB.</text>
</comment>
<comment type="subunit">
    <text evidence="2 3">Polymers of ZP2 and ZP3 organized into long filaments cross-linked by ZP1 homodimers. Interacts with ZP1 and ZP2.</text>
</comment>
<comment type="subcellular location">
    <molecule>Processed zona pellucida sperm-binding protein 3</molecule>
    <subcellularLocation>
        <location evidence="3">Zona pellucida</location>
    </subcellularLocation>
</comment>
<comment type="subcellular location">
    <subcellularLocation>
        <location evidence="4">Cell membrane</location>
        <topology evidence="5">Single-pass type I membrane protein</topology>
    </subcellularLocation>
</comment>
<comment type="tissue specificity">
    <text>Expressed in oocytes.</text>
</comment>
<comment type="domain">
    <text>The ZP domain is involved in the polymerization of the ZP proteins to form the zona pellucida.</text>
</comment>
<comment type="PTM">
    <text evidence="8">Proteolytically cleaved before the transmembrane segment to yield the secreted ectodomain incorporated in the zona pellucida.</text>
</comment>
<comment type="PTM">
    <text evidence="1">O-glycosylated; removal of O-linked glycans may play an important role in the post-fertilization block to polyspermy.</text>
</comment>
<comment type="PTM">
    <text>All cysteine residues are involved in disulfide bonds.</text>
</comment>
<comment type="similarity">
    <text evidence="11">Belongs to the ZP domain family. ZPC subfamily.</text>
</comment>
<comment type="online information" name="Protein Spotlight">
    <link uri="https://www.proteinspotlight.org/back_issues/093"/>
    <text>Molecular chastity - Issue 93 of April 2008</text>
</comment>
<evidence type="ECO:0000250" key="1"/>
<evidence type="ECO:0000250" key="2">
    <source>
        <dbReference type="UniProtKB" id="P20239"/>
    </source>
</evidence>
<evidence type="ECO:0000250" key="3">
    <source>
        <dbReference type="UniProtKB" id="P21754"/>
    </source>
</evidence>
<evidence type="ECO:0000250" key="4">
    <source>
        <dbReference type="UniProtKB" id="P48833"/>
    </source>
</evidence>
<evidence type="ECO:0000255" key="5"/>
<evidence type="ECO:0000255" key="6">
    <source>
        <dbReference type="PROSITE-ProRule" id="PRU00375"/>
    </source>
</evidence>
<evidence type="ECO:0000256" key="7">
    <source>
        <dbReference type="SAM" id="MobiDB-lite"/>
    </source>
</evidence>
<evidence type="ECO:0000269" key="8">
    <source>
    </source>
</evidence>
<evidence type="ECO:0000269" key="9">
    <source>
    </source>
</evidence>
<evidence type="ECO:0000269" key="10">
    <source>
    </source>
</evidence>
<evidence type="ECO:0000305" key="11"/>
<accession>P42098</accession>
<gene>
    <name type="primary">ZP3</name>
    <name type="synonym">ZP3B</name>
    <name type="synonym">ZPC</name>
</gene>
<keyword id="KW-1003">Cell membrane</keyword>
<keyword id="KW-0165">Cleavage on pair of basic residues</keyword>
<keyword id="KW-0903">Direct protein sequencing</keyword>
<keyword id="KW-1015">Disulfide bond</keyword>
<keyword id="KW-0272">Extracellular matrix</keyword>
<keyword id="KW-0278">Fertilization</keyword>
<keyword id="KW-0325">Glycoprotein</keyword>
<keyword id="KW-0472">Membrane</keyword>
<keyword id="KW-0873">Pyrrolidone carboxylic acid</keyword>
<keyword id="KW-0675">Receptor</keyword>
<keyword id="KW-1185">Reference proteome</keyword>
<keyword id="KW-0964">Secreted</keyword>
<keyword id="KW-0732">Signal</keyword>
<keyword id="KW-0812">Transmembrane</keyword>
<keyword id="KW-1133">Transmembrane helix</keyword>
<organism>
    <name type="scientific">Sus scrofa</name>
    <name type="common">Pig</name>
    <dbReference type="NCBI Taxonomy" id="9823"/>
    <lineage>
        <taxon>Eukaryota</taxon>
        <taxon>Metazoa</taxon>
        <taxon>Chordata</taxon>
        <taxon>Craniata</taxon>
        <taxon>Vertebrata</taxon>
        <taxon>Euteleostomi</taxon>
        <taxon>Mammalia</taxon>
        <taxon>Eutheria</taxon>
        <taxon>Laurasiatheria</taxon>
        <taxon>Artiodactyla</taxon>
        <taxon>Suina</taxon>
        <taxon>Suidae</taxon>
        <taxon>Sus</taxon>
    </lineage>
</organism>